<feature type="chain" id="PRO_0000451564" description="Translocase of chloroplast 126, chloroplastic">
    <location>
        <begin position="1"/>
        <end position="1149"/>
    </location>
</feature>
<feature type="transmembrane region" description="Helical" evidence="3">
    <location>
        <begin position="1123"/>
        <end position="1144"/>
    </location>
</feature>
<feature type="domain" description="AIG1-type G" evidence="4">
    <location>
        <begin position="514"/>
        <end position="743"/>
    </location>
</feature>
<feature type="region of interest" description="Disordered" evidence="5">
    <location>
        <begin position="1"/>
        <end position="206"/>
    </location>
</feature>
<feature type="region of interest" description="Disordered" evidence="5">
    <location>
        <begin position="219"/>
        <end position="292"/>
    </location>
</feature>
<feature type="region of interest" description="Disordered" evidence="5">
    <location>
        <begin position="315"/>
        <end position="431"/>
    </location>
</feature>
<feature type="region of interest" description="G1" evidence="4">
    <location>
        <begin position="523"/>
        <end position="530"/>
    </location>
</feature>
<feature type="region of interest" description="G2" evidence="4">
    <location>
        <begin position="550"/>
        <end position="554"/>
    </location>
</feature>
<feature type="region of interest" description="G3" evidence="4">
    <location>
        <begin position="570"/>
        <end position="573"/>
    </location>
</feature>
<feature type="region of interest" description="G4" evidence="4">
    <location>
        <begin position="642"/>
        <end position="645"/>
    </location>
</feature>
<feature type="region of interest" description="G5" evidence="4">
    <location>
        <begin position="691"/>
        <end position="693"/>
    </location>
</feature>
<feature type="region of interest" description="Disordered" evidence="5">
    <location>
        <begin position="769"/>
        <end position="800"/>
    </location>
</feature>
<feature type="region of interest" description="Disordered" evidence="5">
    <location>
        <begin position="833"/>
        <end position="869"/>
    </location>
</feature>
<feature type="compositionally biased region" description="Acidic residues" evidence="5">
    <location>
        <begin position="131"/>
        <end position="142"/>
    </location>
</feature>
<feature type="compositionally biased region" description="Low complexity" evidence="5">
    <location>
        <begin position="152"/>
        <end position="168"/>
    </location>
</feature>
<feature type="compositionally biased region" description="Acidic residues" evidence="5">
    <location>
        <begin position="271"/>
        <end position="280"/>
    </location>
</feature>
<feature type="compositionally biased region" description="Acidic residues" evidence="5">
    <location>
        <begin position="335"/>
        <end position="357"/>
    </location>
</feature>
<feature type="compositionally biased region" description="Polar residues" evidence="5">
    <location>
        <begin position="406"/>
        <end position="429"/>
    </location>
</feature>
<feature type="compositionally biased region" description="Acidic residues" evidence="5">
    <location>
        <begin position="773"/>
        <end position="796"/>
    </location>
</feature>
<feature type="compositionally biased region" description="Basic and acidic residues" evidence="5">
    <location>
        <begin position="833"/>
        <end position="842"/>
    </location>
</feature>
<feature type="compositionally biased region" description="Basic and acidic residues" evidence="5">
    <location>
        <begin position="852"/>
        <end position="862"/>
    </location>
</feature>
<feature type="binding site" evidence="2">
    <location>
        <begin position="526"/>
        <end position="531"/>
    </location>
    <ligand>
        <name>GTP</name>
        <dbReference type="ChEBI" id="CHEBI:37565"/>
    </ligand>
</feature>
<feature type="binding site" evidence="2">
    <location>
        <position position="530"/>
    </location>
    <ligand>
        <name>Mg(2+)</name>
        <dbReference type="ChEBI" id="CHEBI:18420"/>
    </ligand>
</feature>
<feature type="binding site" evidence="2">
    <location>
        <position position="643"/>
    </location>
    <ligand>
        <name>GTP</name>
        <dbReference type="ChEBI" id="CHEBI:37565"/>
    </ligand>
</feature>
<feature type="binding site" evidence="2">
    <location>
        <begin position="691"/>
        <end position="692"/>
    </location>
    <ligand>
        <name>GTP</name>
        <dbReference type="ChEBI" id="CHEBI:37565"/>
    </ligand>
</feature>
<protein>
    <recommendedName>
        <fullName evidence="6">Translocase of chloroplast 126, chloroplastic</fullName>
        <ecNumber evidence="6">3.6.5.-</ecNumber>
    </recommendedName>
    <alternativeName>
        <fullName evidence="6">126 kDa chloroplast outer envelope protein</fullName>
    </alternativeName>
</protein>
<dbReference type="EC" id="3.6.5.-" evidence="6"/>
<dbReference type="EMBL" id="DS545012">
    <property type="protein sequence ID" value="EDQ64903.1"/>
    <property type="molecule type" value="Genomic_DNA"/>
</dbReference>
<dbReference type="RefSeq" id="XP_001770228.1">
    <property type="nucleotide sequence ID" value="XM_001770176.1"/>
</dbReference>
<dbReference type="SMR" id="A9SV60"/>
<dbReference type="FunCoup" id="A9SV60">
    <property type="interactions" value="2521"/>
</dbReference>
<dbReference type="eggNOG" id="ENOG502QR60">
    <property type="taxonomic scope" value="Eukaryota"/>
</dbReference>
<dbReference type="InParanoid" id="A9SV60"/>
<dbReference type="Proteomes" id="UP000006727">
    <property type="component" value="Unplaced"/>
</dbReference>
<dbReference type="GO" id="GO:0009707">
    <property type="term" value="C:chloroplast outer membrane"/>
    <property type="evidence" value="ECO:0000318"/>
    <property type="project" value="GO_Central"/>
</dbReference>
<dbReference type="GO" id="GO:0005525">
    <property type="term" value="F:GTP binding"/>
    <property type="evidence" value="ECO:0007669"/>
    <property type="project" value="UniProtKB-KW"/>
</dbReference>
<dbReference type="GO" id="GO:0003924">
    <property type="term" value="F:GTPase activity"/>
    <property type="evidence" value="ECO:0007669"/>
    <property type="project" value="InterPro"/>
</dbReference>
<dbReference type="GO" id="GO:0046872">
    <property type="term" value="F:metal ion binding"/>
    <property type="evidence" value="ECO:0007669"/>
    <property type="project" value="UniProtKB-KW"/>
</dbReference>
<dbReference type="GO" id="GO:0045036">
    <property type="term" value="P:protein targeting to chloroplast"/>
    <property type="evidence" value="ECO:0000318"/>
    <property type="project" value="GO_Central"/>
</dbReference>
<dbReference type="GO" id="GO:0015031">
    <property type="term" value="P:protein transport"/>
    <property type="evidence" value="ECO:0007669"/>
    <property type="project" value="UniProtKB-KW"/>
</dbReference>
<dbReference type="CDD" id="cd01853">
    <property type="entry name" value="Toc34_like"/>
    <property type="match status" value="1"/>
</dbReference>
<dbReference type="FunFam" id="3.40.50.300:FF:000413">
    <property type="entry name" value="Translocase of chloroplast 120, chloroplastic"/>
    <property type="match status" value="1"/>
</dbReference>
<dbReference type="Gene3D" id="3.40.50.300">
    <property type="entry name" value="P-loop containing nucleotide triphosphate hydrolases"/>
    <property type="match status" value="1"/>
</dbReference>
<dbReference type="InterPro" id="IPR006703">
    <property type="entry name" value="G_AIG1"/>
</dbReference>
<dbReference type="InterPro" id="IPR045058">
    <property type="entry name" value="GIMA/IAN/Toc"/>
</dbReference>
<dbReference type="InterPro" id="IPR027417">
    <property type="entry name" value="P-loop_NTPase"/>
</dbReference>
<dbReference type="InterPro" id="IPR024283">
    <property type="entry name" value="TOC159_MAD"/>
</dbReference>
<dbReference type="InterPro" id="IPR005690">
    <property type="entry name" value="Toc86_159"/>
</dbReference>
<dbReference type="NCBIfam" id="TIGR00993">
    <property type="entry name" value="3a0901s04IAP86"/>
    <property type="match status" value="1"/>
</dbReference>
<dbReference type="PANTHER" id="PTHR10903">
    <property type="entry name" value="GTPASE, IMAP FAMILY MEMBER-RELATED"/>
    <property type="match status" value="1"/>
</dbReference>
<dbReference type="PANTHER" id="PTHR10903:SF135">
    <property type="entry name" value="TRANSLOCASE OF CHLOROPLAST 120, CHLOROPLASTIC-RELATED"/>
    <property type="match status" value="1"/>
</dbReference>
<dbReference type="Pfam" id="PF04548">
    <property type="entry name" value="AIG1"/>
    <property type="match status" value="1"/>
</dbReference>
<dbReference type="Pfam" id="PF11886">
    <property type="entry name" value="TOC159_MAD"/>
    <property type="match status" value="1"/>
</dbReference>
<dbReference type="SUPFAM" id="SSF52540">
    <property type="entry name" value="P-loop containing nucleoside triphosphate hydrolases"/>
    <property type="match status" value="1"/>
</dbReference>
<dbReference type="PROSITE" id="PS51720">
    <property type="entry name" value="G_AIG1"/>
    <property type="match status" value="1"/>
</dbReference>
<name>TC126_PHYPA</name>
<gene>
    <name evidence="6" type="primary">TOC126</name>
    <name evidence="7" type="ORF">PHYPADRAFT_188734</name>
</gene>
<accession>A9SV60</accession>
<comment type="function">
    <text evidence="1">GTPase involved in protein precursor import into chloroplasts. Seems to recognize chloroplast-destined precursor proteins and regulate their presentation to the translocation channel through GTP hydrolysis. Probably specialized in the import of nuclear encoded non-photosynthetic preproteins from the cytoplasm to the chloroplast.</text>
</comment>
<comment type="cofactor">
    <cofactor evidence="2">
        <name>Mg(2+)</name>
        <dbReference type="ChEBI" id="CHEBI:18420"/>
    </cofactor>
    <text evidence="2">Binds 1 Mg(2+) ion by subunit.</text>
</comment>
<comment type="subunit">
    <text evidence="1">Part of the TOC core complex.</text>
</comment>
<comment type="subcellular location">
    <subcellularLocation>
        <location evidence="6">Plastid</location>
        <location evidence="6">Chloroplast outer membrane</location>
        <topology evidence="3">Single-pass membrane protein</topology>
    </subcellularLocation>
</comment>
<comment type="similarity">
    <text evidence="6">Belongs to the TRAFAC class TrmE-Era-EngA-EngB-Septin-like GTPase superfamily. AIG1/Toc34/Toc159-like paraseptin GTPase family. TOC159 subfamily.</text>
</comment>
<reference key="1">
    <citation type="journal article" date="2008" name="Science">
        <title>The Physcomitrella genome reveals evolutionary insights into the conquest of land by plants.</title>
        <authorList>
            <person name="Rensing S.A."/>
            <person name="Lang D."/>
            <person name="Zimmer A.D."/>
            <person name="Terry A."/>
            <person name="Salamov A."/>
            <person name="Shapiro H."/>
            <person name="Nishiyama T."/>
            <person name="Perroud P.-F."/>
            <person name="Lindquist E.A."/>
            <person name="Kamisugi Y."/>
            <person name="Tanahashi T."/>
            <person name="Sakakibara K."/>
            <person name="Fujita T."/>
            <person name="Oishi K."/>
            <person name="Shin-I T."/>
            <person name="Kuroki Y."/>
            <person name="Toyoda A."/>
            <person name="Suzuki Y."/>
            <person name="Hashimoto S.-I."/>
            <person name="Yamaguchi K."/>
            <person name="Sugano S."/>
            <person name="Kohara Y."/>
            <person name="Fujiyama A."/>
            <person name="Anterola A."/>
            <person name="Aoki S."/>
            <person name="Ashton N."/>
            <person name="Barbazuk W.B."/>
            <person name="Barker E."/>
            <person name="Bennetzen J.L."/>
            <person name="Blankenship R."/>
            <person name="Cho S.H."/>
            <person name="Dutcher S.K."/>
            <person name="Estelle M."/>
            <person name="Fawcett J.A."/>
            <person name="Gundlach H."/>
            <person name="Hanada K."/>
            <person name="Heyl A."/>
            <person name="Hicks K.A."/>
            <person name="Hughes J."/>
            <person name="Lohr M."/>
            <person name="Mayer K."/>
            <person name="Melkozernov A."/>
            <person name="Murata T."/>
            <person name="Nelson D.R."/>
            <person name="Pils B."/>
            <person name="Prigge M."/>
            <person name="Reiss B."/>
            <person name="Renner T."/>
            <person name="Rombauts S."/>
            <person name="Rushton P.J."/>
            <person name="Sanderfoot A."/>
            <person name="Schween G."/>
            <person name="Shiu S.-H."/>
            <person name="Stueber K."/>
            <person name="Theodoulou F.L."/>
            <person name="Tu H."/>
            <person name="Van de Peer Y."/>
            <person name="Verrier P.J."/>
            <person name="Waters E."/>
            <person name="Wood A."/>
            <person name="Yang L."/>
            <person name="Cove D."/>
            <person name="Cuming A.C."/>
            <person name="Hasebe M."/>
            <person name="Lucas S."/>
            <person name="Mishler B.D."/>
            <person name="Reski R."/>
            <person name="Grigoriev I.V."/>
            <person name="Quatrano R.S."/>
            <person name="Boore J.L."/>
        </authorList>
    </citation>
    <scope>NUCLEOTIDE SEQUENCE [LARGE SCALE GENOMIC DNA]</scope>
    <source>
        <strain>cv. Gransden 2004</strain>
    </source>
</reference>
<keyword id="KW-0150">Chloroplast</keyword>
<keyword id="KW-0175">Coiled coil</keyword>
<keyword id="KW-0342">GTP-binding</keyword>
<keyword id="KW-0378">Hydrolase</keyword>
<keyword id="KW-0460">Magnesium</keyword>
<keyword id="KW-0472">Membrane</keyword>
<keyword id="KW-0479">Metal-binding</keyword>
<keyword id="KW-0547">Nucleotide-binding</keyword>
<keyword id="KW-0934">Plastid</keyword>
<keyword id="KW-1002">Plastid outer membrane</keyword>
<keyword id="KW-0653">Protein transport</keyword>
<keyword id="KW-1185">Reference proteome</keyword>
<keyword id="KW-0812">Transmembrane</keyword>
<keyword id="KW-1133">Transmembrane helix</keyword>
<keyword id="KW-0813">Transport</keyword>
<sequence length="1149" mass="125564">MDALRKLSSLGRNQDKILDTASSSSYTEASVAEIPKASVETGGKDEASPSGLAPIKVRVSNDVGAEIEEKRGGDEESVGSGESFDSALERLAASSVTSFEPPSPVGSVGEQSQFAGGVSEDLEERGQEEYLYYDDYGDDGEVEKDGSEKDSTSSSSSSSSSECSSSASNTEDEMDISEYGASSERAMPLANPSGVTDEEEEDGKELKYNVERAVTAEENMPNGLKLGSEARGIASSSRGAELGNAFKDSREDHEVQEELTERSVKVAVENYDQEGEDADSTEIKKEFPRELTQSRTVIESPAYRFTSEPVDPALLELKSEKAQPNTQSFARIAEGESDADADADADDEDVESGDEHEDGYTEINIRQAAGKSESENESGNNPSLGPAGPSLISVLVRKTARRPASTAATDTQSSNAASSTQVAGTTDVNPSIEVNEVNETREKLQNIRVKFLRLVHRLGQSPQNVVVAQVLYRLGLAESLRGGSTRNHTRAFDFDRANAIAEEQEADNQEEELDFACTILVLGKTGVGKSATINSIFDEHKSVTNAYNPSTTNVYEVVGTMLGVKVRFVDTPGLLFSVADQRHNERIMGRVKKYIKKASPDIVLYFDRMDMQTREFGDVPLLRTITNVFGTAVWFNTIVVLTHASTAPPDGPNGTPMGYELFVAQRSHSVQQSIRQVAGDMRLQNPVSLVENHPACRANRNGQRVLPNGQIWKPHLMLLCFASKILAEANTLLKLQDTAAPGRPFGQRSRVPPLPFLLSSLLQSRAQLKLPDEQLDESDESDDDEEDEEEGDEYDDLPPFRSLSKEELEELSKDQRQEYAEELAVRERLFQKKQHREQLQRRKEMKKRATAMRKEGLSHPADEADDEAGQPAAVPVPMPDMALPPSFDSDNPTHRYRYLETANQWLVRPVLETHGWDHDAGYDGFNVEKMFVVKNKIPASISGQVTKDKKESQVNFEAAASLKHGEGKVTLTGFDVQTIGKDLAYTLRAETRFNNFKRNKTTAGVTATYLNDTIAAGVKLEDRILIGKRVKMVVNGGVLTGKGDKAFGGSLEATLRGKEYPLSRTLSTLGLSVMDWHGDLAIGGNLQSQFMVGKTMMVGRANLNNRGSGQVSIRASSSEQLQMVLIGIVPILRSLINCRFGFGGGQSSQ</sequence>
<evidence type="ECO:0000250" key="1">
    <source>
        <dbReference type="UniProtKB" id="A9SY64"/>
    </source>
</evidence>
<evidence type="ECO:0000250" key="2">
    <source>
        <dbReference type="UniProtKB" id="O23680"/>
    </source>
</evidence>
<evidence type="ECO:0000255" key="3"/>
<evidence type="ECO:0000255" key="4">
    <source>
        <dbReference type="PROSITE-ProRule" id="PRU01057"/>
    </source>
</evidence>
<evidence type="ECO:0000256" key="5">
    <source>
        <dbReference type="SAM" id="MobiDB-lite"/>
    </source>
</evidence>
<evidence type="ECO:0000305" key="6"/>
<evidence type="ECO:0000312" key="7">
    <source>
        <dbReference type="EMBL" id="EDQ64903.1"/>
    </source>
</evidence>
<organism>
    <name type="scientific">Physcomitrium patens</name>
    <name type="common">Spreading-leaved earth moss</name>
    <name type="synonym">Physcomitrella patens</name>
    <dbReference type="NCBI Taxonomy" id="3218"/>
    <lineage>
        <taxon>Eukaryota</taxon>
        <taxon>Viridiplantae</taxon>
        <taxon>Streptophyta</taxon>
        <taxon>Embryophyta</taxon>
        <taxon>Bryophyta</taxon>
        <taxon>Bryophytina</taxon>
        <taxon>Bryopsida</taxon>
        <taxon>Funariidae</taxon>
        <taxon>Funariales</taxon>
        <taxon>Funariaceae</taxon>
        <taxon>Physcomitrium</taxon>
    </lineage>
</organism>
<proteinExistence type="inferred from homology"/>